<keyword id="KW-0121">Carboxypeptidase</keyword>
<keyword id="KW-1015">Disulfide bond</keyword>
<keyword id="KW-0325">Glycoprotein</keyword>
<keyword id="KW-0378">Hydrolase</keyword>
<keyword id="KW-0645">Protease</keyword>
<keyword id="KW-1185">Reference proteome</keyword>
<keyword id="KW-0732">Signal</keyword>
<keyword id="KW-0926">Vacuole</keyword>
<keyword id="KW-0865">Zymogen</keyword>
<feature type="signal peptide" evidence="2">
    <location>
        <begin position="1"/>
        <end position="17"/>
    </location>
</feature>
<feature type="propeptide" id="PRO_0000407459" evidence="1">
    <location>
        <begin position="18"/>
        <end position="137"/>
    </location>
</feature>
<feature type="chain" id="PRO_0000407460" description="Carboxypeptidase Y homolog A">
    <location>
        <begin position="138"/>
        <end position="554"/>
    </location>
</feature>
<feature type="active site" evidence="3">
    <location>
        <position position="278"/>
    </location>
</feature>
<feature type="active site" evidence="3">
    <location>
        <position position="470"/>
    </location>
</feature>
<feature type="active site" evidence="3">
    <location>
        <position position="529"/>
    </location>
</feature>
<feature type="glycosylation site" description="N-linked (GlcNAc...) asparagine" evidence="2">
    <location>
        <position position="222"/>
    </location>
</feature>
<feature type="glycosylation site" description="N-linked (GlcNAc...) asparagine" evidence="2">
    <location>
        <position position="518"/>
    </location>
</feature>
<feature type="disulfide bond" evidence="1">
    <location>
        <begin position="191"/>
        <end position="431"/>
    </location>
</feature>
<feature type="disulfide bond" evidence="1">
    <location>
        <begin position="325"/>
        <end position="339"/>
    </location>
</feature>
<feature type="disulfide bond" evidence="1">
    <location>
        <begin position="349"/>
        <end position="372"/>
    </location>
</feature>
<feature type="disulfide bond" evidence="1">
    <location>
        <begin position="356"/>
        <end position="365"/>
    </location>
</feature>
<feature type="disulfide bond" evidence="1">
    <location>
        <begin position="394"/>
        <end position="401"/>
    </location>
</feature>
<sequence>MRISASTVLLGAASAASAASFQNQAQHVLADNFHKAHDAVKPVADSFAHTTLESFEEAFNGMNSQAKALWDEIKLLVPENAFDKPTWFSKPKAAKRRKDWDHVVKGADVQKLWVKGADGEKHREVGGQLDNFNLRVKSVDPSKLGVDKVKQYSGYLDDEENDKHLFYWFFESRNDPKNDPVVLWLNGGPGCSSLTGLFLELGPSSIDKKLRVVSNEYAWNNNASVIFLDQPVNVGYSYSGNAVSNTVAAGKDVYALLTLFFHQFPEYAKQDFHIAGESYAGHYIPVFASEILSHKDRNINLKSVLIGNGLTDPLTQYEHYRPMACGEGGYPAVLSESECRSMDNALPRCQSLIRNCYESGSVWSCVPAAIYCNNQFIGPYQRTGQNVYDIRGKCEDDSNLCYSALGWISDYLNQKDVMDALGVEVEGYESCNFDINRNFLFQGDWMQPFHRLVPGILKEIPVLIYAGDADFICNWLGNKAWSEALEWPGKNGFNKAELEDLSLPKADKEYGKVKSSGNFTFMQIYQAGHMVPMDQPENSLDFLNRWLGGEWFEQ</sequence>
<proteinExistence type="inferred from homology"/>
<organism>
    <name type="scientific">Neurospora crassa (strain ATCC 24698 / 74-OR23-1A / CBS 708.71 / DSM 1257 / FGSC 987)</name>
    <dbReference type="NCBI Taxonomy" id="367110"/>
    <lineage>
        <taxon>Eukaryota</taxon>
        <taxon>Fungi</taxon>
        <taxon>Dikarya</taxon>
        <taxon>Ascomycota</taxon>
        <taxon>Pezizomycotina</taxon>
        <taxon>Sordariomycetes</taxon>
        <taxon>Sordariomycetidae</taxon>
        <taxon>Sordariales</taxon>
        <taxon>Sordariaceae</taxon>
        <taxon>Neurospora</taxon>
    </lineage>
</organism>
<protein>
    <recommendedName>
        <fullName>Carboxypeptidase Y homolog A</fullName>
        <ecNumber>3.4.16.5</ecNumber>
    </recommendedName>
</protein>
<evidence type="ECO:0000250" key="1"/>
<evidence type="ECO:0000255" key="2"/>
<evidence type="ECO:0000255" key="3">
    <source>
        <dbReference type="PROSITE-ProRule" id="PRU10074"/>
    </source>
</evidence>
<evidence type="ECO:0000305" key="4"/>
<dbReference type="EC" id="3.4.16.5"/>
<dbReference type="EMBL" id="CM002238">
    <property type="protein sequence ID" value="EAA27560.1"/>
    <property type="molecule type" value="Genomic_DNA"/>
</dbReference>
<dbReference type="RefSeq" id="XP_956796.1">
    <property type="nucleotide sequence ID" value="XM_951703.3"/>
</dbReference>
<dbReference type="SMR" id="Q7RXW8"/>
<dbReference type="FunCoup" id="Q7RXW8">
    <property type="interactions" value="816"/>
</dbReference>
<dbReference type="STRING" id="367110.Q7RXW8"/>
<dbReference type="ESTHER" id="neucr-CBPYA">
    <property type="family name" value="Carboxypeptidase_S10"/>
</dbReference>
<dbReference type="MEROPS" id="S10.001"/>
<dbReference type="GlyCosmos" id="Q7RXW8">
    <property type="glycosylation" value="2 sites, No reported glycans"/>
</dbReference>
<dbReference type="PaxDb" id="5141-EFNCRP00000000022"/>
<dbReference type="EnsemblFungi" id="EAA27560">
    <property type="protein sequence ID" value="EAA27560"/>
    <property type="gene ID" value="NCU00477"/>
</dbReference>
<dbReference type="GeneID" id="3872943"/>
<dbReference type="KEGG" id="ncr:NCU00477"/>
<dbReference type="VEuPathDB" id="FungiDB:NCU00477"/>
<dbReference type="HOGENOM" id="CLU_008523_10_4_1"/>
<dbReference type="InParanoid" id="Q7RXW8"/>
<dbReference type="OrthoDB" id="443318at2759"/>
<dbReference type="Proteomes" id="UP000001805">
    <property type="component" value="Chromosome 3, Linkage Group III"/>
</dbReference>
<dbReference type="GO" id="GO:0000324">
    <property type="term" value="C:fungal-type vacuole"/>
    <property type="evidence" value="ECO:0000318"/>
    <property type="project" value="GO_Central"/>
</dbReference>
<dbReference type="GO" id="GO:0004185">
    <property type="term" value="F:serine-type carboxypeptidase activity"/>
    <property type="evidence" value="ECO:0000318"/>
    <property type="project" value="GO_Central"/>
</dbReference>
<dbReference type="GO" id="GO:0006508">
    <property type="term" value="P:proteolysis"/>
    <property type="evidence" value="ECO:0007669"/>
    <property type="project" value="UniProtKB-KW"/>
</dbReference>
<dbReference type="FunFam" id="1.10.287.410:FF:000001">
    <property type="entry name" value="Carboxypeptidase Y"/>
    <property type="match status" value="1"/>
</dbReference>
<dbReference type="Gene3D" id="1.10.287.410">
    <property type="match status" value="1"/>
</dbReference>
<dbReference type="Gene3D" id="3.40.50.1820">
    <property type="entry name" value="alpha/beta hydrolase"/>
    <property type="match status" value="1"/>
</dbReference>
<dbReference type="InterPro" id="IPR029058">
    <property type="entry name" value="AB_hydrolase_fold"/>
</dbReference>
<dbReference type="InterPro" id="IPR001563">
    <property type="entry name" value="Peptidase_S10"/>
</dbReference>
<dbReference type="InterPro" id="IPR008442">
    <property type="entry name" value="Propeptide_carboxypepY"/>
</dbReference>
<dbReference type="InterPro" id="IPR018202">
    <property type="entry name" value="Ser_caboxypep_ser_AS"/>
</dbReference>
<dbReference type="PANTHER" id="PTHR11802:SF113">
    <property type="entry name" value="SERINE CARBOXYPEPTIDASE CTSA-4.1"/>
    <property type="match status" value="1"/>
</dbReference>
<dbReference type="PANTHER" id="PTHR11802">
    <property type="entry name" value="SERINE PROTEASE FAMILY S10 SERINE CARBOXYPEPTIDASE"/>
    <property type="match status" value="1"/>
</dbReference>
<dbReference type="Pfam" id="PF05388">
    <property type="entry name" value="Carbpep_Y_N"/>
    <property type="match status" value="1"/>
</dbReference>
<dbReference type="Pfam" id="PF00450">
    <property type="entry name" value="Peptidase_S10"/>
    <property type="match status" value="1"/>
</dbReference>
<dbReference type="PRINTS" id="PR00724">
    <property type="entry name" value="CRBOXYPTASEC"/>
</dbReference>
<dbReference type="SUPFAM" id="SSF53474">
    <property type="entry name" value="alpha/beta-Hydrolases"/>
    <property type="match status" value="1"/>
</dbReference>
<dbReference type="PROSITE" id="PS00131">
    <property type="entry name" value="CARBOXYPEPT_SER_SER"/>
    <property type="match status" value="1"/>
</dbReference>
<gene>
    <name type="primary">cpyA</name>
    <name type="ORF">NCU00477</name>
</gene>
<reference key="1">
    <citation type="journal article" date="2003" name="Nature">
        <title>The genome sequence of the filamentous fungus Neurospora crassa.</title>
        <authorList>
            <person name="Galagan J.E."/>
            <person name="Calvo S.E."/>
            <person name="Borkovich K.A."/>
            <person name="Selker E.U."/>
            <person name="Read N.D."/>
            <person name="Jaffe D.B."/>
            <person name="FitzHugh W."/>
            <person name="Ma L.-J."/>
            <person name="Smirnov S."/>
            <person name="Purcell S."/>
            <person name="Rehman B."/>
            <person name="Elkins T."/>
            <person name="Engels R."/>
            <person name="Wang S."/>
            <person name="Nielsen C.B."/>
            <person name="Butler J."/>
            <person name="Endrizzi M."/>
            <person name="Qui D."/>
            <person name="Ianakiev P."/>
            <person name="Bell-Pedersen D."/>
            <person name="Nelson M.A."/>
            <person name="Werner-Washburne M."/>
            <person name="Selitrennikoff C.P."/>
            <person name="Kinsey J.A."/>
            <person name="Braun E.L."/>
            <person name="Zelter A."/>
            <person name="Schulte U."/>
            <person name="Kothe G.O."/>
            <person name="Jedd G."/>
            <person name="Mewes H.-W."/>
            <person name="Staben C."/>
            <person name="Marcotte E."/>
            <person name="Greenberg D."/>
            <person name="Roy A."/>
            <person name="Foley K."/>
            <person name="Naylor J."/>
            <person name="Stange-Thomann N."/>
            <person name="Barrett R."/>
            <person name="Gnerre S."/>
            <person name="Kamal M."/>
            <person name="Kamvysselis M."/>
            <person name="Mauceli E.W."/>
            <person name="Bielke C."/>
            <person name="Rudd S."/>
            <person name="Frishman D."/>
            <person name="Krystofova S."/>
            <person name="Rasmussen C."/>
            <person name="Metzenberg R.L."/>
            <person name="Perkins D.D."/>
            <person name="Kroken S."/>
            <person name="Cogoni C."/>
            <person name="Macino G."/>
            <person name="Catcheside D.E.A."/>
            <person name="Li W."/>
            <person name="Pratt R.J."/>
            <person name="Osmani S.A."/>
            <person name="DeSouza C.P.C."/>
            <person name="Glass N.L."/>
            <person name="Orbach M.J."/>
            <person name="Berglund J.A."/>
            <person name="Voelker R."/>
            <person name="Yarden O."/>
            <person name="Plamann M."/>
            <person name="Seiler S."/>
            <person name="Dunlap J.C."/>
            <person name="Radford A."/>
            <person name="Aramayo R."/>
            <person name="Natvig D.O."/>
            <person name="Alex L.A."/>
            <person name="Mannhaupt G."/>
            <person name="Ebbole D.J."/>
            <person name="Freitag M."/>
            <person name="Paulsen I."/>
            <person name="Sachs M.S."/>
            <person name="Lander E.S."/>
            <person name="Nusbaum C."/>
            <person name="Birren B.W."/>
        </authorList>
    </citation>
    <scope>NUCLEOTIDE SEQUENCE [LARGE SCALE GENOMIC DNA]</scope>
    <source>
        <strain>ATCC 24698 / 74-OR23-1A / CBS 708.71 / DSM 1257 / FGSC 987</strain>
    </source>
</reference>
<accession>Q7RXW8</accession>
<name>CBPYA_NEUCR</name>
<comment type="function">
    <text evidence="1">Vacuolar carboxypeptidase involved in degradation of small peptides. Digests preferentially peptides containing an aliphatic or hydrophobic residue in P1' position, as well as methionine, leucine or phenylalanine in P1 position of ester substrate (By similarity).</text>
</comment>
<comment type="catalytic activity">
    <reaction evidence="3">
        <text>Release of a C-terminal amino acid with broad specificity.</text>
        <dbReference type="EC" id="3.4.16.5"/>
    </reaction>
</comment>
<comment type="subcellular location">
    <subcellularLocation>
        <location evidence="1">Vacuole</location>
    </subcellularLocation>
</comment>
<comment type="similarity">
    <text evidence="4">Belongs to the peptidase S10 family.</text>
</comment>